<sequence>MAGRSGASDTELLQVCKIIKILYQSNPCPEPTGTRQARRNRRRRWRARQRQIREISERILTSCLGRPPEPVTLQLPPLERLTLNCSEDCGTSGEKGEGSPQISLESSTILGTGTKE</sequence>
<gene>
    <name evidence="1" type="primary">rev</name>
</gene>
<comment type="function">
    <text evidence="1">Escorts unspliced or incompletely spliced viral pre-mRNAs (late transcripts) out of the nucleus of infected cells. These pre-mRNAs carry a recognition sequence called Rev responsive element (RRE) located in the env gene, that is not present in fully spliced viral mRNAs (early transcripts). This function is essential since most viral proteins are translated from unspliced or partially spliced pre-mRNAs which cannot exit the nucleus by the pathway used by fully processed cellular mRNAs. Rev itself is translated from a fully spliced mRNA that readily exits the nucleus. Rev's nuclear localization signal (NLS) binds directly to KPNB1/Importin beta-1 without previous binding to KPNA1/Importin alpha-1. KPNB1 binds to the GDP bound form of RAN (Ran-GDP) and targets Rev to the nucleus. In the nucleus, the conversion from Ran-GDP to Ran-GTP dissociates Rev from KPNB1 and allows Rev's binding to the RRE in viral pre-mRNAs. Rev multimerization on the RRE via cooperative assembly exposes its nuclear export signal (NES) to the surface. Rev can then form a complex with XPO1/CRM1 and Ran-GTP, leading to nuclear export of the complex. Conversion from Ran-GTP to Ran-GDP mediates dissociation of the Rev/RRE/XPO1/RAN complex, so that Rev can return to the nucleus for a subsequent round of export. Beside KPNB1, also seems to interact with TNPO1/Transportin-1, RANBP5/IPO5 and IPO7/RANBP7 for nuclear import. The nucleoporin-like HRB/RIP is an essential cofactor that probably indirectly interacts with Rev to release HIV RNAs from the perinuclear region to the cytoplasm.</text>
</comment>
<comment type="subunit">
    <text evidence="1">Homomultimer; when bound to the RRE. Multimeric assembly is essential for activity and may involve XPO1. Binds to human KPNB1, XPO1, TNPO1, RANBP5 and IPO7. Interacts with the viral Integrase. Interacts with human KHDRBS1. Interacts with human NAP1; this interaction decreases Rev multimerization and stimulates its activity. Interacts with human DEAD-box helicases DDX3 and DDX24; these interactions may serve for viral RNA export to the cytoplasm and packaging, respectively. Interacts with human PSIP1; this interaction may inhibit HIV-1 DNA integration by promoting dissociation of the Integrase-LEDGF/p75 complex.</text>
</comment>
<comment type="subcellular location">
    <subcellularLocation>
        <location evidence="1">Host nucleus</location>
        <location evidence="1">Host nucleolus</location>
    </subcellularLocation>
    <subcellularLocation>
        <location evidence="1">Host cytoplasm</location>
    </subcellularLocation>
    <text evidence="1">The presence of both nuclear import and nuclear export signals leads to continuous shuttling between the nucleus and cytoplasm.</text>
</comment>
<comment type="domain">
    <text evidence="1">The RNA-binding motif binds to the RRE, a 240 bp stem-and-loop structure present in incompletely spliced viral pre-mRNAs. This region also contains the NLS which mediates nuclear localization via KPNB1 binding and, when the N-terminal sequence is present, nucleolar targeting. These overlapping functions prevent Rev bound to RRE from undesirable return to the nucleus. When Rev binds the RRE, the NLS becomes masked while the NES remains accessible. The leucine-rich NES mediates binding to human XPO1.</text>
</comment>
<comment type="PTM">
    <text evidence="1">Asymmetrically arginine dimethylated at one site by host PRMT6. Methylation impairs the RNA-binding activity and export of viral RNA from the nucleus to the cytoplasm.</text>
</comment>
<comment type="PTM">
    <text evidence="1">Phosphorylated by protein kinase CK2. Presence of, and maybe binding to the N-terminus of the regulatory beta subunit of CK2 is necessary for CK2-mediated Rev's phosphorylation.</text>
</comment>
<comment type="miscellaneous">
    <text evidence="1">HIV-1 lineages are divided in three main groups, M (for Major), O (for Outlier), and N (for New, or Non-M, Non-O). The vast majority of strains found worldwide belong to the group M. Group O seems to be endemic to and largely confined to Cameroon and neighboring countries in West Central Africa, where these viruses represent a small minority of HIV-1 strains. The group N is represented by a limited number of isolates from Cameroonian persons. The group M is further subdivided in 9 clades or subtypes (A to D, F to H, J and K).</text>
</comment>
<comment type="similarity">
    <text evidence="1">Belongs to the HIV-1 REV protein family.</text>
</comment>
<organism>
    <name type="scientific">Human immunodeficiency virus type 1 group M subtype H (isolate 90CF056)</name>
    <name type="common">HIV-1</name>
    <dbReference type="NCBI Taxonomy" id="388826"/>
    <lineage>
        <taxon>Viruses</taxon>
        <taxon>Riboviria</taxon>
        <taxon>Pararnavirae</taxon>
        <taxon>Artverviricota</taxon>
        <taxon>Revtraviricetes</taxon>
        <taxon>Ortervirales</taxon>
        <taxon>Retroviridae</taxon>
        <taxon>Orthoretrovirinae</taxon>
        <taxon>Lentivirus</taxon>
        <taxon>Human immunodeficiency virus type 1</taxon>
    </lineage>
</organism>
<evidence type="ECO:0000255" key="1">
    <source>
        <dbReference type="HAMAP-Rule" id="MF_04077"/>
    </source>
</evidence>
<evidence type="ECO:0000256" key="2">
    <source>
        <dbReference type="SAM" id="MobiDB-lite"/>
    </source>
</evidence>
<dbReference type="EMBL" id="AF005496">
    <property type="protein sequence ID" value="AAD03183.1"/>
    <property type="molecule type" value="Genomic_DNA"/>
</dbReference>
<dbReference type="SMR" id="O70900"/>
<dbReference type="Proteomes" id="UP000007685">
    <property type="component" value="Segment"/>
</dbReference>
<dbReference type="GO" id="GO:0030430">
    <property type="term" value="C:host cell cytoplasm"/>
    <property type="evidence" value="ECO:0007669"/>
    <property type="project" value="UniProtKB-SubCell"/>
</dbReference>
<dbReference type="GO" id="GO:0044196">
    <property type="term" value="C:host cell nucleolus"/>
    <property type="evidence" value="ECO:0007669"/>
    <property type="project" value="UniProtKB-SubCell"/>
</dbReference>
<dbReference type="GO" id="GO:0003700">
    <property type="term" value="F:DNA-binding transcription factor activity"/>
    <property type="evidence" value="ECO:0007669"/>
    <property type="project" value="UniProtKB-UniRule"/>
</dbReference>
<dbReference type="GO" id="GO:0003723">
    <property type="term" value="F:RNA binding"/>
    <property type="evidence" value="ECO:0007669"/>
    <property type="project" value="UniProtKB-UniRule"/>
</dbReference>
<dbReference type="GO" id="GO:0051028">
    <property type="term" value="P:mRNA transport"/>
    <property type="evidence" value="ECO:0007669"/>
    <property type="project" value="UniProtKB-UniRule"/>
</dbReference>
<dbReference type="GO" id="GO:0016032">
    <property type="term" value="P:viral process"/>
    <property type="evidence" value="ECO:0007669"/>
    <property type="project" value="UniProtKB-UniRule"/>
</dbReference>
<dbReference type="Gene3D" id="6.10.140.630">
    <property type="match status" value="1"/>
</dbReference>
<dbReference type="HAMAP" id="MF_04077">
    <property type="entry name" value="REV_HIV1"/>
    <property type="match status" value="1"/>
</dbReference>
<dbReference type="InterPro" id="IPR000625">
    <property type="entry name" value="REV_protein"/>
</dbReference>
<dbReference type="Pfam" id="PF00424">
    <property type="entry name" value="REV"/>
    <property type="match status" value="1"/>
</dbReference>
<organismHost>
    <name type="scientific">Homo sapiens</name>
    <name type="common">Human</name>
    <dbReference type="NCBI Taxonomy" id="9606"/>
</organismHost>
<feature type="chain" id="PRO_0000244992" description="Protein Rev">
    <location>
        <begin position="1"/>
        <end position="116"/>
    </location>
</feature>
<feature type="region of interest" description="Homomultimerization" evidence="1">
    <location>
        <begin position="18"/>
        <end position="26"/>
    </location>
</feature>
<feature type="region of interest" description="Disordered" evidence="2">
    <location>
        <begin position="87"/>
        <end position="116"/>
    </location>
</feature>
<feature type="short sequence motif" description="Nuclear localization signal and RNA-binding (RRE)" evidence="1">
    <location>
        <begin position="34"/>
        <end position="50"/>
    </location>
</feature>
<feature type="short sequence motif" description="Nuclear export signal and binding to XPO1" evidence="1">
    <location>
        <begin position="73"/>
        <end position="84"/>
    </location>
</feature>
<feature type="compositionally biased region" description="Polar residues" evidence="2">
    <location>
        <begin position="100"/>
        <end position="116"/>
    </location>
</feature>
<feature type="modified residue" description="Phosphoserine; by host CK2" evidence="1">
    <location>
        <position position="5"/>
    </location>
</feature>
<feature type="modified residue" description="Phosphoserine; by host CK2" evidence="1">
    <location>
        <position position="8"/>
    </location>
</feature>
<feature type="modified residue" description="Phosphoserine; by host" evidence="1">
    <location>
        <position position="92"/>
    </location>
</feature>
<feature type="modified residue" description="Phosphoserine; by host" evidence="1">
    <location>
        <position position="99"/>
    </location>
</feature>
<proteinExistence type="inferred from homology"/>
<keyword id="KW-0014">AIDS</keyword>
<keyword id="KW-1035">Host cytoplasm</keyword>
<keyword id="KW-1048">Host nucleus</keyword>
<keyword id="KW-0945">Host-virus interaction</keyword>
<keyword id="KW-0488">Methylation</keyword>
<keyword id="KW-0509">mRNA transport</keyword>
<keyword id="KW-0597">Phosphoprotein</keyword>
<keyword id="KW-1185">Reference proteome</keyword>
<keyword id="KW-0694">RNA-binding</keyword>
<keyword id="KW-0813">Transport</keyword>
<protein>
    <recommendedName>
        <fullName evidence="1">Protein Rev</fullName>
    </recommendedName>
    <alternativeName>
        <fullName evidence="1">ART/TRS</fullName>
    </alternativeName>
    <alternativeName>
        <fullName evidence="1">Anti-repression transactivator</fullName>
    </alternativeName>
    <alternativeName>
        <fullName evidence="1">Regulator of expression of viral proteins</fullName>
    </alternativeName>
</protein>
<reference key="1">
    <citation type="journal article" date="1998" name="J. Virol.">
        <title>A comprehensive panel of near-full-length clones and reference sequences for non-subtype B isolates of human immunodeficiency virus type 1.</title>
        <authorList>
            <person name="Gao F."/>
            <person name="Robertson D.L."/>
            <person name="Carruthers C.D."/>
            <person name="Morrison S.G."/>
            <person name="Jian B."/>
            <person name="Chen Y."/>
            <person name="Barre-Sinoussi F."/>
            <person name="Girard M."/>
            <person name="Srinivasan A."/>
            <person name="Abimiku A.G."/>
            <person name="Shaw G.M."/>
            <person name="Sharp P.M."/>
            <person name="Hahn B.H."/>
        </authorList>
    </citation>
    <scope>NUCLEOTIDE SEQUENCE [GENOMIC DNA]</scope>
</reference>
<reference key="2">
    <citation type="journal article" date="1999" name="Arch. Biochem. Biophys.">
        <title>The ins and outs of HIV Rev.</title>
        <authorList>
            <person name="Hope T.J."/>
        </authorList>
    </citation>
    <scope>REVIEW</scope>
</reference>
<name>REV_HV190</name>
<accession>O70900</accession>